<organism>
    <name type="scientific">Bacillus anthracis</name>
    <dbReference type="NCBI Taxonomy" id="1392"/>
    <lineage>
        <taxon>Bacteria</taxon>
        <taxon>Bacillati</taxon>
        <taxon>Bacillota</taxon>
        <taxon>Bacilli</taxon>
        <taxon>Bacillales</taxon>
        <taxon>Bacillaceae</taxon>
        <taxon>Bacillus</taxon>
        <taxon>Bacillus cereus group</taxon>
    </lineage>
</organism>
<name>Y541_BACAN</name>
<reference key="1">
    <citation type="journal article" date="2003" name="Nature">
        <title>The genome sequence of Bacillus anthracis Ames and comparison to closely related bacteria.</title>
        <authorList>
            <person name="Read T.D."/>
            <person name="Peterson S.N."/>
            <person name="Tourasse N.J."/>
            <person name="Baillie L.W."/>
            <person name="Paulsen I.T."/>
            <person name="Nelson K.E."/>
            <person name="Tettelin H."/>
            <person name="Fouts D.E."/>
            <person name="Eisen J.A."/>
            <person name="Gill S.R."/>
            <person name="Holtzapple E.K."/>
            <person name="Okstad O.A."/>
            <person name="Helgason E."/>
            <person name="Rilstone J."/>
            <person name="Wu M."/>
            <person name="Kolonay J.F."/>
            <person name="Beanan M.J."/>
            <person name="Dodson R.J."/>
            <person name="Brinkac L.M."/>
            <person name="Gwinn M.L."/>
            <person name="DeBoy R.T."/>
            <person name="Madpu R."/>
            <person name="Daugherty S.C."/>
            <person name="Durkin A.S."/>
            <person name="Haft D.H."/>
            <person name="Nelson W.C."/>
            <person name="Peterson J.D."/>
            <person name="Pop M."/>
            <person name="Khouri H.M."/>
            <person name="Radune D."/>
            <person name="Benton J.L."/>
            <person name="Mahamoud Y."/>
            <person name="Jiang L."/>
            <person name="Hance I.R."/>
            <person name="Weidman J.F."/>
            <person name="Berry K.J."/>
            <person name="Plaut R.D."/>
            <person name="Wolf A.M."/>
            <person name="Watkins K.L."/>
            <person name="Nierman W.C."/>
            <person name="Hazen A."/>
            <person name="Cline R.T."/>
            <person name="Redmond C."/>
            <person name="Thwaite J.E."/>
            <person name="White O."/>
            <person name="Salzberg S.L."/>
            <person name="Thomason B."/>
            <person name="Friedlander A.M."/>
            <person name="Koehler T.M."/>
            <person name="Hanna P.C."/>
            <person name="Kolstoe A.-B."/>
            <person name="Fraser C.M."/>
        </authorList>
    </citation>
    <scope>NUCLEOTIDE SEQUENCE [LARGE SCALE GENOMIC DNA]</scope>
    <source>
        <strain>Ames / isolate Porton</strain>
    </source>
</reference>
<reference key="2">
    <citation type="journal article" date="2009" name="J. Bacteriol.">
        <title>The complete genome sequence of Bacillus anthracis Ames 'Ancestor'.</title>
        <authorList>
            <person name="Ravel J."/>
            <person name="Jiang L."/>
            <person name="Stanley S.T."/>
            <person name="Wilson M.R."/>
            <person name="Decker R.S."/>
            <person name="Read T.D."/>
            <person name="Worsham P."/>
            <person name="Keim P.S."/>
            <person name="Salzberg S.L."/>
            <person name="Fraser-Liggett C.M."/>
            <person name="Rasko D.A."/>
        </authorList>
    </citation>
    <scope>NUCLEOTIDE SEQUENCE [LARGE SCALE GENOMIC DNA]</scope>
    <source>
        <strain>Ames ancestor</strain>
    </source>
</reference>
<reference key="3">
    <citation type="submission" date="2004-01" db="EMBL/GenBank/DDBJ databases">
        <title>Complete genome sequence of Bacillus anthracis Sterne.</title>
        <authorList>
            <person name="Brettin T.S."/>
            <person name="Bruce D."/>
            <person name="Challacombe J.F."/>
            <person name="Gilna P."/>
            <person name="Han C."/>
            <person name="Hill K."/>
            <person name="Hitchcock P."/>
            <person name="Jackson P."/>
            <person name="Keim P."/>
            <person name="Longmire J."/>
            <person name="Lucas S."/>
            <person name="Okinaka R."/>
            <person name="Richardson P."/>
            <person name="Rubin E."/>
            <person name="Tice H."/>
        </authorList>
    </citation>
    <scope>NUCLEOTIDE SEQUENCE [LARGE SCALE GENOMIC DNA]</scope>
    <source>
        <strain>Sterne</strain>
    </source>
</reference>
<dbReference type="EMBL" id="AE016879">
    <property type="protein sequence ID" value="AAP24562.1"/>
    <property type="molecule type" value="Genomic_DNA"/>
</dbReference>
<dbReference type="EMBL" id="AE017334">
    <property type="protein sequence ID" value="AAT29638.1"/>
    <property type="molecule type" value="Genomic_DNA"/>
</dbReference>
<dbReference type="EMBL" id="AE017225">
    <property type="protein sequence ID" value="AAT52839.1"/>
    <property type="molecule type" value="Genomic_DNA"/>
</dbReference>
<dbReference type="RefSeq" id="NP_843076.1">
    <property type="nucleotide sequence ID" value="NC_003997.3"/>
</dbReference>
<dbReference type="RefSeq" id="WP_000532948.1">
    <property type="nucleotide sequence ID" value="NZ_WXXJ01000029.1"/>
</dbReference>
<dbReference type="RefSeq" id="YP_026788.1">
    <property type="nucleotide sequence ID" value="NC_005945.1"/>
</dbReference>
<dbReference type="SMR" id="Q81YU1"/>
<dbReference type="STRING" id="261594.GBAA_0541"/>
<dbReference type="DNASU" id="1087851"/>
<dbReference type="GeneID" id="45020606"/>
<dbReference type="KEGG" id="ban:BA_0541"/>
<dbReference type="KEGG" id="bar:GBAA_0541"/>
<dbReference type="KEGG" id="bat:BAS0510"/>
<dbReference type="PATRIC" id="fig|198094.11.peg.539"/>
<dbReference type="eggNOG" id="COG0217">
    <property type="taxonomic scope" value="Bacteria"/>
</dbReference>
<dbReference type="HOGENOM" id="CLU_062974_2_0_9"/>
<dbReference type="OMA" id="NFDIPDE"/>
<dbReference type="OrthoDB" id="9781053at2"/>
<dbReference type="Proteomes" id="UP000000427">
    <property type="component" value="Chromosome"/>
</dbReference>
<dbReference type="Proteomes" id="UP000000594">
    <property type="component" value="Chromosome"/>
</dbReference>
<dbReference type="GO" id="GO:0005829">
    <property type="term" value="C:cytosol"/>
    <property type="evidence" value="ECO:0007669"/>
    <property type="project" value="TreeGrafter"/>
</dbReference>
<dbReference type="GO" id="GO:0003677">
    <property type="term" value="F:DNA binding"/>
    <property type="evidence" value="ECO:0007669"/>
    <property type="project" value="UniProtKB-UniRule"/>
</dbReference>
<dbReference type="GO" id="GO:0006355">
    <property type="term" value="P:regulation of DNA-templated transcription"/>
    <property type="evidence" value="ECO:0007669"/>
    <property type="project" value="UniProtKB-UniRule"/>
</dbReference>
<dbReference type="FunFam" id="1.10.10.200:FF:000003">
    <property type="entry name" value="Probable transcriptional regulatory protein YeeN"/>
    <property type="match status" value="1"/>
</dbReference>
<dbReference type="FunFam" id="3.30.70.980:FF:000004">
    <property type="entry name" value="Probable transcriptional regulatory protein YeeN"/>
    <property type="match status" value="1"/>
</dbReference>
<dbReference type="Gene3D" id="1.10.10.200">
    <property type="match status" value="1"/>
</dbReference>
<dbReference type="Gene3D" id="3.30.70.980">
    <property type="match status" value="2"/>
</dbReference>
<dbReference type="HAMAP" id="MF_00693">
    <property type="entry name" value="Transcrip_reg_TACO1"/>
    <property type="match status" value="1"/>
</dbReference>
<dbReference type="HAMAP" id="MF_00918">
    <property type="entry name" value="Transcrip_reg_TACO1_YeeN"/>
    <property type="match status" value="1"/>
</dbReference>
<dbReference type="InterPro" id="IPR017856">
    <property type="entry name" value="Integrase-like_N"/>
</dbReference>
<dbReference type="InterPro" id="IPR048300">
    <property type="entry name" value="TACO1_YebC-like_2nd/3rd_dom"/>
</dbReference>
<dbReference type="InterPro" id="IPR049083">
    <property type="entry name" value="TACO1_YebC_N"/>
</dbReference>
<dbReference type="InterPro" id="IPR002876">
    <property type="entry name" value="Transcrip_reg_TACO1-like"/>
</dbReference>
<dbReference type="InterPro" id="IPR026564">
    <property type="entry name" value="Transcrip_reg_TACO1-like_dom3"/>
</dbReference>
<dbReference type="InterPro" id="IPR026562">
    <property type="entry name" value="Transcrip_reg_TACO1_YeeN"/>
</dbReference>
<dbReference type="InterPro" id="IPR029072">
    <property type="entry name" value="YebC-like"/>
</dbReference>
<dbReference type="NCBIfam" id="NF001030">
    <property type="entry name" value="PRK00110.1"/>
    <property type="match status" value="1"/>
</dbReference>
<dbReference type="NCBIfam" id="NF009044">
    <property type="entry name" value="PRK12378.1"/>
    <property type="match status" value="1"/>
</dbReference>
<dbReference type="NCBIfam" id="TIGR01033">
    <property type="entry name" value="YebC/PmpR family DNA-binding transcriptional regulator"/>
    <property type="match status" value="1"/>
</dbReference>
<dbReference type="PANTHER" id="PTHR12532">
    <property type="entry name" value="TRANSLATIONAL ACTIVATOR OF CYTOCHROME C OXIDASE 1"/>
    <property type="match status" value="1"/>
</dbReference>
<dbReference type="PANTHER" id="PTHR12532:SF0">
    <property type="entry name" value="TRANSLATIONAL ACTIVATOR OF CYTOCHROME C OXIDASE 1"/>
    <property type="match status" value="1"/>
</dbReference>
<dbReference type="Pfam" id="PF20772">
    <property type="entry name" value="TACO1_YebC_N"/>
    <property type="match status" value="1"/>
</dbReference>
<dbReference type="Pfam" id="PF01709">
    <property type="entry name" value="Transcrip_reg"/>
    <property type="match status" value="1"/>
</dbReference>
<dbReference type="SUPFAM" id="SSF75625">
    <property type="entry name" value="YebC-like"/>
    <property type="match status" value="1"/>
</dbReference>
<accession>Q81YU1</accession>
<accession>Q6I3P2</accession>
<accession>Q6KXF5</accession>
<comment type="subcellular location">
    <subcellularLocation>
        <location evidence="1">Cytoplasm</location>
    </subcellularLocation>
</comment>
<comment type="similarity">
    <text evidence="1">Belongs to the TACO1 family. YeeN subfamily.</text>
</comment>
<feature type="chain" id="PRO_0000175752" description="Probable transcriptional regulatory protein BA_0541/GBAA_0541/BAS0510">
    <location>
        <begin position="1"/>
        <end position="239"/>
    </location>
</feature>
<evidence type="ECO:0000255" key="1">
    <source>
        <dbReference type="HAMAP-Rule" id="MF_00918"/>
    </source>
</evidence>
<keyword id="KW-0963">Cytoplasm</keyword>
<keyword id="KW-0238">DNA-binding</keyword>
<keyword id="KW-1185">Reference proteome</keyword>
<keyword id="KW-0804">Transcription</keyword>
<keyword id="KW-0805">Transcription regulation</keyword>
<proteinExistence type="inferred from homology"/>
<sequence length="239" mass="26358">MGRKWNNIKDKKASKDANTSRIYAKFGREIYVAAKQGEPDPESNQALRVVLERAKTYNVPRTIIDRAVEKAKGGSEENYDELRYEGFGPNGAMVIVDTLTNNVNRTAADVRAAFSKNSGNMGVNGSVAYMFDATAVIGLEGKTSDEVLEILMEADVDARDILEEEDAVIVYAEPDQFHAVQSALKDAGVEEFTVAELTMLAQNDVTLPEDAQAQFEKMVDALEDLEDVQQVYHNVDLGE</sequence>
<protein>
    <recommendedName>
        <fullName evidence="1">Probable transcriptional regulatory protein BA_0541/GBAA_0541/BAS0510</fullName>
    </recommendedName>
</protein>
<gene>
    <name type="ordered locus">BA_0541</name>
    <name type="ordered locus">GBAA_0541</name>
    <name type="ordered locus">BAS0510</name>
</gene>